<name>SPEB_ECOBW</name>
<dbReference type="EC" id="3.5.3.11" evidence="1"/>
<dbReference type="EMBL" id="CP001396">
    <property type="protein sequence ID" value="ACR61943.1"/>
    <property type="molecule type" value="Genomic_DNA"/>
</dbReference>
<dbReference type="RefSeq" id="WP_000105566.1">
    <property type="nucleotide sequence ID" value="NC_012759.1"/>
</dbReference>
<dbReference type="SMR" id="C5A0K6"/>
<dbReference type="GeneID" id="89517749"/>
<dbReference type="KEGG" id="ebw:BWG_2659"/>
<dbReference type="HOGENOM" id="CLU_039478_0_0_6"/>
<dbReference type="UniPathway" id="UPA00534">
    <property type="reaction ID" value="UER00287"/>
</dbReference>
<dbReference type="GO" id="GO:0008783">
    <property type="term" value="F:agmatinase activity"/>
    <property type="evidence" value="ECO:0007669"/>
    <property type="project" value="UniProtKB-UniRule"/>
</dbReference>
<dbReference type="GO" id="GO:0030145">
    <property type="term" value="F:manganese ion binding"/>
    <property type="evidence" value="ECO:0007669"/>
    <property type="project" value="InterPro"/>
</dbReference>
<dbReference type="GO" id="GO:0033389">
    <property type="term" value="P:putrescine biosynthetic process from arginine, via agmatine"/>
    <property type="evidence" value="ECO:0007669"/>
    <property type="project" value="TreeGrafter"/>
</dbReference>
<dbReference type="GO" id="GO:0008295">
    <property type="term" value="P:spermidine biosynthetic process"/>
    <property type="evidence" value="ECO:0007669"/>
    <property type="project" value="UniProtKB-UniRule"/>
</dbReference>
<dbReference type="CDD" id="cd11592">
    <property type="entry name" value="Agmatinase_PAH"/>
    <property type="match status" value="1"/>
</dbReference>
<dbReference type="FunFam" id="3.40.800.10:FF:000001">
    <property type="entry name" value="Agmatinase"/>
    <property type="match status" value="1"/>
</dbReference>
<dbReference type="Gene3D" id="3.40.800.10">
    <property type="entry name" value="Ureohydrolase domain"/>
    <property type="match status" value="1"/>
</dbReference>
<dbReference type="HAMAP" id="MF_01418">
    <property type="entry name" value="SpeB"/>
    <property type="match status" value="1"/>
</dbReference>
<dbReference type="InterPro" id="IPR023694">
    <property type="entry name" value="Agmatinase"/>
</dbReference>
<dbReference type="InterPro" id="IPR005925">
    <property type="entry name" value="Agmatinase-rel"/>
</dbReference>
<dbReference type="InterPro" id="IPR006035">
    <property type="entry name" value="Ureohydrolase"/>
</dbReference>
<dbReference type="InterPro" id="IPR023696">
    <property type="entry name" value="Ureohydrolase_dom_sf"/>
</dbReference>
<dbReference type="InterPro" id="IPR020855">
    <property type="entry name" value="Ureohydrolase_Mn_BS"/>
</dbReference>
<dbReference type="NCBIfam" id="TIGR01230">
    <property type="entry name" value="agmatinase"/>
    <property type="match status" value="1"/>
</dbReference>
<dbReference type="NCBIfam" id="NF002564">
    <property type="entry name" value="PRK02190.1"/>
    <property type="match status" value="1"/>
</dbReference>
<dbReference type="PANTHER" id="PTHR11358">
    <property type="entry name" value="ARGINASE/AGMATINASE"/>
    <property type="match status" value="1"/>
</dbReference>
<dbReference type="PANTHER" id="PTHR11358:SF26">
    <property type="entry name" value="GUANIDINO ACID HYDROLASE, MITOCHONDRIAL"/>
    <property type="match status" value="1"/>
</dbReference>
<dbReference type="Pfam" id="PF00491">
    <property type="entry name" value="Arginase"/>
    <property type="match status" value="1"/>
</dbReference>
<dbReference type="PIRSF" id="PIRSF036979">
    <property type="entry name" value="Arginase"/>
    <property type="match status" value="1"/>
</dbReference>
<dbReference type="SUPFAM" id="SSF52768">
    <property type="entry name" value="Arginase/deacetylase"/>
    <property type="match status" value="1"/>
</dbReference>
<dbReference type="PROSITE" id="PS01053">
    <property type="entry name" value="ARGINASE_1"/>
    <property type="match status" value="1"/>
</dbReference>
<dbReference type="PROSITE" id="PS51409">
    <property type="entry name" value="ARGINASE_2"/>
    <property type="match status" value="1"/>
</dbReference>
<comment type="function">
    <text evidence="1">Catalyzes the formation of putrescine from agmatine.</text>
</comment>
<comment type="catalytic activity">
    <reaction evidence="1">
        <text>agmatine + H2O = urea + putrescine</text>
        <dbReference type="Rhea" id="RHEA:13929"/>
        <dbReference type="ChEBI" id="CHEBI:15377"/>
        <dbReference type="ChEBI" id="CHEBI:16199"/>
        <dbReference type="ChEBI" id="CHEBI:58145"/>
        <dbReference type="ChEBI" id="CHEBI:326268"/>
        <dbReference type="EC" id="3.5.3.11"/>
    </reaction>
</comment>
<comment type="cofactor">
    <cofactor evidence="1">
        <name>Mn(2+)</name>
        <dbReference type="ChEBI" id="CHEBI:29035"/>
    </cofactor>
</comment>
<comment type="pathway">
    <text evidence="1">Amine and polyamine biosynthesis; putrescine biosynthesis via agmatine pathway; putrescine from agmatine: step 1/1.</text>
</comment>
<comment type="similarity">
    <text evidence="1">Belongs to the arginase family. Agmatinase subfamily.</text>
</comment>
<proteinExistence type="inferred from homology"/>
<reference key="1">
    <citation type="journal article" date="2009" name="J. Bacteriol.">
        <title>Genomic sequencing reveals regulatory mutations and recombinational events in the widely used MC4100 lineage of Escherichia coli K-12.</title>
        <authorList>
            <person name="Ferenci T."/>
            <person name="Zhou Z."/>
            <person name="Betteridge T."/>
            <person name="Ren Y."/>
            <person name="Liu Y."/>
            <person name="Feng L."/>
            <person name="Reeves P.R."/>
            <person name="Wang L."/>
        </authorList>
    </citation>
    <scope>NUCLEOTIDE SEQUENCE [LARGE SCALE GENOMIC DNA]</scope>
    <source>
        <strain>K12 / MC4100 / BW2952</strain>
    </source>
</reference>
<organism>
    <name type="scientific">Escherichia coli (strain K12 / MC4100 / BW2952)</name>
    <dbReference type="NCBI Taxonomy" id="595496"/>
    <lineage>
        <taxon>Bacteria</taxon>
        <taxon>Pseudomonadati</taxon>
        <taxon>Pseudomonadota</taxon>
        <taxon>Gammaproteobacteria</taxon>
        <taxon>Enterobacterales</taxon>
        <taxon>Enterobacteriaceae</taxon>
        <taxon>Escherichia</taxon>
    </lineage>
</organism>
<feature type="chain" id="PRO_1000215250" description="Agmatinase">
    <location>
        <begin position="1"/>
        <end position="306"/>
    </location>
</feature>
<feature type="binding site" evidence="1">
    <location>
        <position position="126"/>
    </location>
    <ligand>
        <name>Mn(2+)</name>
        <dbReference type="ChEBI" id="CHEBI:29035"/>
    </ligand>
</feature>
<feature type="binding site" evidence="1">
    <location>
        <position position="149"/>
    </location>
    <ligand>
        <name>Mn(2+)</name>
        <dbReference type="ChEBI" id="CHEBI:29035"/>
    </ligand>
</feature>
<feature type="binding site" evidence="1">
    <location>
        <position position="151"/>
    </location>
    <ligand>
        <name>Mn(2+)</name>
        <dbReference type="ChEBI" id="CHEBI:29035"/>
    </ligand>
</feature>
<feature type="binding site" evidence="1">
    <location>
        <position position="153"/>
    </location>
    <ligand>
        <name>Mn(2+)</name>
        <dbReference type="ChEBI" id="CHEBI:29035"/>
    </ligand>
</feature>
<feature type="binding site" evidence="1">
    <location>
        <position position="230"/>
    </location>
    <ligand>
        <name>Mn(2+)</name>
        <dbReference type="ChEBI" id="CHEBI:29035"/>
    </ligand>
</feature>
<feature type="binding site" evidence="1">
    <location>
        <position position="232"/>
    </location>
    <ligand>
        <name>Mn(2+)</name>
        <dbReference type="ChEBI" id="CHEBI:29035"/>
    </ligand>
</feature>
<accession>C5A0K6</accession>
<sequence>MSTLGHQYDNSLVSNAFGFLRLPMNFQPYDSDADWVITGVPFDMATSGRAGGRHGPAAIRQVSTNLAWEHNRFPWNFDMRERLNVVDCGDLVYAFGDAREMSEKLQAHAEKLLAAGKRMLSFGGDHFVTLPLLRAHAKHFGKMALVHFDAHTDTYANGCEFDHGTMFYTAPKEGLIDPNHSVQIGIRTEFDKDNGFTVLDACQVNDRSVDDVIAQVKQIVGDMPVYLTFDIDCLDPAFAPGTGTPVIGGLTSDRAIKLVRGLKDLNIVGMDVVEVAPAYDQSEITALAAATLALEMLYIQAAKKGE</sequence>
<evidence type="ECO:0000255" key="1">
    <source>
        <dbReference type="HAMAP-Rule" id="MF_01418"/>
    </source>
</evidence>
<protein>
    <recommendedName>
        <fullName evidence="1">Agmatinase</fullName>
        <ecNumber evidence="1">3.5.3.11</ecNumber>
    </recommendedName>
    <alternativeName>
        <fullName evidence="1">Agmatine ureohydrolase</fullName>
        <shortName evidence="1">AUH</shortName>
    </alternativeName>
</protein>
<gene>
    <name evidence="1" type="primary">speB</name>
    <name type="ordered locus">BWG_2659</name>
</gene>
<keyword id="KW-0378">Hydrolase</keyword>
<keyword id="KW-0464">Manganese</keyword>
<keyword id="KW-0479">Metal-binding</keyword>
<keyword id="KW-0620">Polyamine biosynthesis</keyword>
<keyword id="KW-0661">Putrescine biosynthesis</keyword>
<keyword id="KW-0745">Spermidine biosynthesis</keyword>